<proteinExistence type="inferred from homology"/>
<sequence length="345" mass="37363">MKDDKEKALSAALAQIERQFGKGSIMKLGDNTTMDVETISTGSLGLDIALGAGGLPMGRVVEIYGPESSGKTTLTLEVIAEAQRNGKVCAFIDAEHALDPVYAEKLGVNIDELLISQPDTGEQALEIVDMLTRSGAIDVIVVDSVAALTPKAEIEGDMGDSHMGLQARMLSQAMRKLTGNLKKSNTMLIFINQIRMKIGVMFGSPETTTGGNALKFYASVRLDIRRIGAVKNGDEIVGNETRVKVVKNKIAPPFKQAEFQILYGEGINNLGELIELGVKHEFVEKAGAWYSCNGERIGQGKANAAKYLDEHPEMAKDVDTKLRDMFLSKTVVAEDKSEVKEKEKA</sequence>
<dbReference type="EMBL" id="CP000083">
    <property type="protein sequence ID" value="AAZ25774.1"/>
    <property type="molecule type" value="Genomic_DNA"/>
</dbReference>
<dbReference type="RefSeq" id="WP_011044870.1">
    <property type="nucleotide sequence ID" value="NC_003910.7"/>
</dbReference>
<dbReference type="SMR" id="Q47WN3"/>
<dbReference type="STRING" id="167879.CPS_4134"/>
<dbReference type="KEGG" id="cps:CPS_4134"/>
<dbReference type="eggNOG" id="COG0468">
    <property type="taxonomic scope" value="Bacteria"/>
</dbReference>
<dbReference type="HOGENOM" id="CLU_040469_3_2_6"/>
<dbReference type="Proteomes" id="UP000000547">
    <property type="component" value="Chromosome"/>
</dbReference>
<dbReference type="GO" id="GO:0005829">
    <property type="term" value="C:cytosol"/>
    <property type="evidence" value="ECO:0007669"/>
    <property type="project" value="TreeGrafter"/>
</dbReference>
<dbReference type="GO" id="GO:0005524">
    <property type="term" value="F:ATP binding"/>
    <property type="evidence" value="ECO:0007669"/>
    <property type="project" value="UniProtKB-UniRule"/>
</dbReference>
<dbReference type="GO" id="GO:0016887">
    <property type="term" value="F:ATP hydrolysis activity"/>
    <property type="evidence" value="ECO:0007669"/>
    <property type="project" value="InterPro"/>
</dbReference>
<dbReference type="GO" id="GO:0140664">
    <property type="term" value="F:ATP-dependent DNA damage sensor activity"/>
    <property type="evidence" value="ECO:0007669"/>
    <property type="project" value="InterPro"/>
</dbReference>
<dbReference type="GO" id="GO:0003684">
    <property type="term" value="F:damaged DNA binding"/>
    <property type="evidence" value="ECO:0007669"/>
    <property type="project" value="UniProtKB-UniRule"/>
</dbReference>
<dbReference type="GO" id="GO:0003697">
    <property type="term" value="F:single-stranded DNA binding"/>
    <property type="evidence" value="ECO:0007669"/>
    <property type="project" value="UniProtKB-UniRule"/>
</dbReference>
<dbReference type="GO" id="GO:0006310">
    <property type="term" value="P:DNA recombination"/>
    <property type="evidence" value="ECO:0007669"/>
    <property type="project" value="UniProtKB-UniRule"/>
</dbReference>
<dbReference type="GO" id="GO:0006281">
    <property type="term" value="P:DNA repair"/>
    <property type="evidence" value="ECO:0007669"/>
    <property type="project" value="UniProtKB-UniRule"/>
</dbReference>
<dbReference type="GO" id="GO:0009432">
    <property type="term" value="P:SOS response"/>
    <property type="evidence" value="ECO:0007669"/>
    <property type="project" value="UniProtKB-UniRule"/>
</dbReference>
<dbReference type="CDD" id="cd00983">
    <property type="entry name" value="RecA"/>
    <property type="match status" value="1"/>
</dbReference>
<dbReference type="FunFam" id="3.40.50.300:FF:000087">
    <property type="entry name" value="Recombinase RecA"/>
    <property type="match status" value="1"/>
</dbReference>
<dbReference type="Gene3D" id="3.40.50.300">
    <property type="entry name" value="P-loop containing nucleotide triphosphate hydrolases"/>
    <property type="match status" value="1"/>
</dbReference>
<dbReference type="HAMAP" id="MF_00268">
    <property type="entry name" value="RecA"/>
    <property type="match status" value="1"/>
</dbReference>
<dbReference type="InterPro" id="IPR003593">
    <property type="entry name" value="AAA+_ATPase"/>
</dbReference>
<dbReference type="InterPro" id="IPR013765">
    <property type="entry name" value="DNA_recomb/repair_RecA"/>
</dbReference>
<dbReference type="InterPro" id="IPR020584">
    <property type="entry name" value="DNA_recomb/repair_RecA_CS"/>
</dbReference>
<dbReference type="InterPro" id="IPR027417">
    <property type="entry name" value="P-loop_NTPase"/>
</dbReference>
<dbReference type="InterPro" id="IPR049261">
    <property type="entry name" value="RecA-like_C"/>
</dbReference>
<dbReference type="InterPro" id="IPR049428">
    <property type="entry name" value="RecA-like_N"/>
</dbReference>
<dbReference type="InterPro" id="IPR020588">
    <property type="entry name" value="RecA_ATP-bd"/>
</dbReference>
<dbReference type="InterPro" id="IPR023400">
    <property type="entry name" value="RecA_C_sf"/>
</dbReference>
<dbReference type="InterPro" id="IPR020587">
    <property type="entry name" value="RecA_monomer-monomer_interface"/>
</dbReference>
<dbReference type="NCBIfam" id="TIGR02012">
    <property type="entry name" value="tigrfam_recA"/>
    <property type="match status" value="1"/>
</dbReference>
<dbReference type="PANTHER" id="PTHR45900:SF1">
    <property type="entry name" value="MITOCHONDRIAL DNA REPAIR PROTEIN RECA HOMOLOG-RELATED"/>
    <property type="match status" value="1"/>
</dbReference>
<dbReference type="PANTHER" id="PTHR45900">
    <property type="entry name" value="RECA"/>
    <property type="match status" value="1"/>
</dbReference>
<dbReference type="Pfam" id="PF00154">
    <property type="entry name" value="RecA"/>
    <property type="match status" value="1"/>
</dbReference>
<dbReference type="Pfam" id="PF21096">
    <property type="entry name" value="RecA_C"/>
    <property type="match status" value="1"/>
</dbReference>
<dbReference type="PRINTS" id="PR00142">
    <property type="entry name" value="RECA"/>
</dbReference>
<dbReference type="SMART" id="SM00382">
    <property type="entry name" value="AAA"/>
    <property type="match status" value="1"/>
</dbReference>
<dbReference type="SUPFAM" id="SSF52540">
    <property type="entry name" value="P-loop containing nucleoside triphosphate hydrolases"/>
    <property type="match status" value="1"/>
</dbReference>
<dbReference type="SUPFAM" id="SSF54752">
    <property type="entry name" value="RecA protein, C-terminal domain"/>
    <property type="match status" value="1"/>
</dbReference>
<dbReference type="PROSITE" id="PS00321">
    <property type="entry name" value="RECA_1"/>
    <property type="match status" value="1"/>
</dbReference>
<dbReference type="PROSITE" id="PS50162">
    <property type="entry name" value="RECA_2"/>
    <property type="match status" value="1"/>
</dbReference>
<dbReference type="PROSITE" id="PS50163">
    <property type="entry name" value="RECA_3"/>
    <property type="match status" value="1"/>
</dbReference>
<gene>
    <name evidence="1" type="primary">recA</name>
    <name type="ordered locus">CPS_4134</name>
</gene>
<feature type="chain" id="PRO_1000047905" description="Protein RecA">
    <location>
        <begin position="1"/>
        <end position="345"/>
    </location>
</feature>
<feature type="binding site" evidence="1">
    <location>
        <begin position="65"/>
        <end position="72"/>
    </location>
    <ligand>
        <name>ATP</name>
        <dbReference type="ChEBI" id="CHEBI:30616"/>
    </ligand>
</feature>
<comment type="function">
    <text evidence="1">Can catalyze the hydrolysis of ATP in the presence of single-stranded DNA, the ATP-dependent uptake of single-stranded DNA by duplex DNA, and the ATP-dependent hybridization of homologous single-stranded DNAs. It interacts with LexA causing its activation and leading to its autocatalytic cleavage.</text>
</comment>
<comment type="subcellular location">
    <subcellularLocation>
        <location evidence="1">Cytoplasm</location>
    </subcellularLocation>
</comment>
<comment type="similarity">
    <text evidence="1">Belongs to the RecA family.</text>
</comment>
<evidence type="ECO:0000255" key="1">
    <source>
        <dbReference type="HAMAP-Rule" id="MF_00268"/>
    </source>
</evidence>
<accession>Q47WN3</accession>
<keyword id="KW-0067">ATP-binding</keyword>
<keyword id="KW-0963">Cytoplasm</keyword>
<keyword id="KW-0227">DNA damage</keyword>
<keyword id="KW-0233">DNA recombination</keyword>
<keyword id="KW-0234">DNA repair</keyword>
<keyword id="KW-0238">DNA-binding</keyword>
<keyword id="KW-0547">Nucleotide-binding</keyword>
<keyword id="KW-0742">SOS response</keyword>
<name>RECA_COLP3</name>
<organism>
    <name type="scientific">Colwellia psychrerythraea (strain 34H / ATCC BAA-681)</name>
    <name type="common">Vibrio psychroerythus</name>
    <dbReference type="NCBI Taxonomy" id="167879"/>
    <lineage>
        <taxon>Bacteria</taxon>
        <taxon>Pseudomonadati</taxon>
        <taxon>Pseudomonadota</taxon>
        <taxon>Gammaproteobacteria</taxon>
        <taxon>Alteromonadales</taxon>
        <taxon>Colwelliaceae</taxon>
        <taxon>Colwellia</taxon>
    </lineage>
</organism>
<protein>
    <recommendedName>
        <fullName evidence="1">Protein RecA</fullName>
    </recommendedName>
    <alternativeName>
        <fullName evidence="1">Recombinase A</fullName>
    </alternativeName>
</protein>
<reference key="1">
    <citation type="journal article" date="2005" name="Proc. Natl. Acad. Sci. U.S.A.">
        <title>The psychrophilic lifestyle as revealed by the genome sequence of Colwellia psychrerythraea 34H through genomic and proteomic analyses.</title>
        <authorList>
            <person name="Methe B.A."/>
            <person name="Nelson K.E."/>
            <person name="Deming J.W."/>
            <person name="Momen B."/>
            <person name="Melamud E."/>
            <person name="Zhang X."/>
            <person name="Moult J."/>
            <person name="Madupu R."/>
            <person name="Nelson W.C."/>
            <person name="Dodson R.J."/>
            <person name="Brinkac L.M."/>
            <person name="Daugherty S.C."/>
            <person name="Durkin A.S."/>
            <person name="DeBoy R.T."/>
            <person name="Kolonay J.F."/>
            <person name="Sullivan S.A."/>
            <person name="Zhou L."/>
            <person name="Davidsen T.M."/>
            <person name="Wu M."/>
            <person name="Huston A.L."/>
            <person name="Lewis M."/>
            <person name="Weaver B."/>
            <person name="Weidman J.F."/>
            <person name="Khouri H."/>
            <person name="Utterback T.R."/>
            <person name="Feldblyum T.V."/>
            <person name="Fraser C.M."/>
        </authorList>
    </citation>
    <scope>NUCLEOTIDE SEQUENCE [LARGE SCALE GENOMIC DNA]</scope>
    <source>
        <strain>34H / ATCC BAA-681</strain>
    </source>
</reference>